<proteinExistence type="inferred from homology"/>
<protein>
    <recommendedName>
        <fullName>DegV domain-containing protein SPy_1936/M5005_Spy1650</fullName>
    </recommendedName>
</protein>
<dbReference type="EMBL" id="AE004092">
    <property type="protein sequence ID" value="AAK34634.1"/>
    <property type="molecule type" value="Genomic_DNA"/>
</dbReference>
<dbReference type="EMBL" id="CP000017">
    <property type="protein sequence ID" value="AAZ52268.1"/>
    <property type="molecule type" value="Genomic_DNA"/>
</dbReference>
<dbReference type="RefSeq" id="NP_269913.1">
    <property type="nucleotide sequence ID" value="NC_002737.2"/>
</dbReference>
<dbReference type="SMR" id="P67374"/>
<dbReference type="PaxDb" id="1314-HKU360_01770"/>
<dbReference type="KEGG" id="spy:SPy_1936"/>
<dbReference type="KEGG" id="spz:M5005_Spy1650"/>
<dbReference type="PATRIC" id="fig|160490.10.peg.1683"/>
<dbReference type="HOGENOM" id="CLU_048251_4_1_9"/>
<dbReference type="OMA" id="KRDAGMP"/>
<dbReference type="Proteomes" id="UP000000750">
    <property type="component" value="Chromosome"/>
</dbReference>
<dbReference type="GO" id="GO:0008289">
    <property type="term" value="F:lipid binding"/>
    <property type="evidence" value="ECO:0007669"/>
    <property type="project" value="UniProtKB-KW"/>
</dbReference>
<dbReference type="Gene3D" id="3.30.1180.10">
    <property type="match status" value="1"/>
</dbReference>
<dbReference type="Gene3D" id="2.20.28.50">
    <property type="entry name" value="degv family protein"/>
    <property type="match status" value="1"/>
</dbReference>
<dbReference type="Gene3D" id="3.40.50.10440">
    <property type="entry name" value="Dihydroxyacetone kinase, domain 1"/>
    <property type="match status" value="1"/>
</dbReference>
<dbReference type="InterPro" id="IPR003797">
    <property type="entry name" value="DegV"/>
</dbReference>
<dbReference type="InterPro" id="IPR043168">
    <property type="entry name" value="DegV_C"/>
</dbReference>
<dbReference type="InterPro" id="IPR050270">
    <property type="entry name" value="DegV_domain_contain"/>
</dbReference>
<dbReference type="NCBIfam" id="TIGR00762">
    <property type="entry name" value="DegV"/>
    <property type="match status" value="1"/>
</dbReference>
<dbReference type="PANTHER" id="PTHR33434">
    <property type="entry name" value="DEGV DOMAIN-CONTAINING PROTEIN DR_1986-RELATED"/>
    <property type="match status" value="1"/>
</dbReference>
<dbReference type="PANTHER" id="PTHR33434:SF2">
    <property type="entry name" value="FATTY ACID-BINDING PROTEIN TM_1468"/>
    <property type="match status" value="1"/>
</dbReference>
<dbReference type="Pfam" id="PF02645">
    <property type="entry name" value="DegV"/>
    <property type="match status" value="1"/>
</dbReference>
<dbReference type="SUPFAM" id="SSF82549">
    <property type="entry name" value="DAK1/DegV-like"/>
    <property type="match status" value="1"/>
</dbReference>
<dbReference type="PROSITE" id="PS51482">
    <property type="entry name" value="DEGV"/>
    <property type="match status" value="1"/>
</dbReference>
<sequence>MTFTIMTDSTADLNQTWAEDHDIVLIGLTILCDGEVYETVGPNRISSDYLLKKMKAGSHPQTSQINVGEFEKVFREHARNNKALLYLAFSSVLSGTYQSALMARDLVREDYPDAVIEIVDTLAAAGGEGYLTILAAEARDSGKNLLETKDIVEAVIPRLRTYFLVDDLFHLMRGGRLSKGSAFLGSLASIKPLLWIDEEGKLVPIAKIRGRQKAIKEMVAQVEKDIADSTVIVSYTSDQGSAEKLREELLAHENISDVLMMPLGPVISAHVGPNTLAVFVIGQNSR</sequence>
<keyword id="KW-0446">Lipid-binding</keyword>
<keyword id="KW-1185">Reference proteome</keyword>
<accession>P67374</accession>
<accession>Q48WK7</accession>
<accession>Q99Y04</accession>
<name>Y1936_STRP1</name>
<gene>
    <name type="ordered locus">SPy_1936</name>
    <name type="ordered locus">M5005_Spy1650</name>
</gene>
<comment type="function">
    <text evidence="1">May bind long-chain fatty acids, such as palmitate, and may play a role in lipid transport or fatty acid metabolism.</text>
</comment>
<evidence type="ECO:0000250" key="1"/>
<evidence type="ECO:0000250" key="2">
    <source>
        <dbReference type="UniProtKB" id="Q9X1H9"/>
    </source>
</evidence>
<evidence type="ECO:0000255" key="3">
    <source>
        <dbReference type="PROSITE-ProRule" id="PRU00815"/>
    </source>
</evidence>
<organism>
    <name type="scientific">Streptococcus pyogenes serotype M1</name>
    <dbReference type="NCBI Taxonomy" id="301447"/>
    <lineage>
        <taxon>Bacteria</taxon>
        <taxon>Bacillati</taxon>
        <taxon>Bacillota</taxon>
        <taxon>Bacilli</taxon>
        <taxon>Lactobacillales</taxon>
        <taxon>Streptococcaceae</taxon>
        <taxon>Streptococcus</taxon>
    </lineage>
</organism>
<reference key="1">
    <citation type="journal article" date="2001" name="Proc. Natl. Acad. Sci. U.S.A.">
        <title>Complete genome sequence of an M1 strain of Streptococcus pyogenes.</title>
        <authorList>
            <person name="Ferretti J.J."/>
            <person name="McShan W.M."/>
            <person name="Ajdic D.J."/>
            <person name="Savic D.J."/>
            <person name="Savic G."/>
            <person name="Lyon K."/>
            <person name="Primeaux C."/>
            <person name="Sezate S."/>
            <person name="Suvorov A.N."/>
            <person name="Kenton S."/>
            <person name="Lai H.S."/>
            <person name="Lin S.P."/>
            <person name="Qian Y."/>
            <person name="Jia H.G."/>
            <person name="Najar F.Z."/>
            <person name="Ren Q."/>
            <person name="Zhu H."/>
            <person name="Song L."/>
            <person name="White J."/>
            <person name="Yuan X."/>
            <person name="Clifton S.W."/>
            <person name="Roe B.A."/>
            <person name="McLaughlin R.E."/>
        </authorList>
    </citation>
    <scope>NUCLEOTIDE SEQUENCE [LARGE SCALE GENOMIC DNA]</scope>
    <source>
        <strain>ATCC 700294 / SF370 / Serotype M1</strain>
    </source>
</reference>
<reference key="2">
    <citation type="journal article" date="2005" name="J. Infect. Dis.">
        <title>Evolutionary origin and emergence of a highly successful clone of serotype M1 group A Streptococcus involved multiple horizontal gene transfer events.</title>
        <authorList>
            <person name="Sumby P."/>
            <person name="Porcella S.F."/>
            <person name="Madrigal A.G."/>
            <person name="Barbian K.D."/>
            <person name="Virtaneva K."/>
            <person name="Ricklefs S.M."/>
            <person name="Sturdevant D.E."/>
            <person name="Graham M.R."/>
            <person name="Vuopio-Varkila J."/>
            <person name="Hoe N.P."/>
            <person name="Musser J.M."/>
        </authorList>
    </citation>
    <scope>NUCLEOTIDE SEQUENCE [LARGE SCALE GENOMIC DNA]</scope>
    <source>
        <strain>ATCC BAA-947 / MGAS5005 / Serotype M1</strain>
    </source>
</reference>
<feature type="chain" id="PRO_0000209812" description="DegV domain-containing protein SPy_1936/M5005_Spy1650">
    <location>
        <begin position="1"/>
        <end position="286"/>
    </location>
</feature>
<feature type="domain" description="DegV" evidence="3">
    <location>
        <begin position="3"/>
        <end position="282"/>
    </location>
</feature>
<feature type="binding site" evidence="2">
    <location>
        <position position="62"/>
    </location>
    <ligand>
        <name>hexadecanoate</name>
        <dbReference type="ChEBI" id="CHEBI:7896"/>
    </ligand>
</feature>
<feature type="binding site" evidence="2">
    <location>
        <position position="94"/>
    </location>
    <ligand>
        <name>hexadecanoate</name>
        <dbReference type="ChEBI" id="CHEBI:7896"/>
    </ligand>
</feature>